<feature type="chain" id="PRO_0000137965" description="Glycerol-3-phosphate dehydrogenase [NAD(P)+]">
    <location>
        <begin position="1"/>
        <end position="344"/>
    </location>
</feature>
<feature type="active site" description="Proton acceptor" evidence="1">
    <location>
        <position position="192"/>
    </location>
</feature>
<feature type="binding site" evidence="1">
    <location>
        <position position="11"/>
    </location>
    <ligand>
        <name>NADPH</name>
        <dbReference type="ChEBI" id="CHEBI:57783"/>
    </ligand>
</feature>
<feature type="binding site" evidence="1">
    <location>
        <position position="12"/>
    </location>
    <ligand>
        <name>NADPH</name>
        <dbReference type="ChEBI" id="CHEBI:57783"/>
    </ligand>
</feature>
<feature type="binding site" evidence="1">
    <location>
        <position position="32"/>
    </location>
    <ligand>
        <name>NADPH</name>
        <dbReference type="ChEBI" id="CHEBI:57783"/>
    </ligand>
</feature>
<feature type="binding site" evidence="1">
    <location>
        <position position="33"/>
    </location>
    <ligand>
        <name>NADPH</name>
        <dbReference type="ChEBI" id="CHEBI:57783"/>
    </ligand>
</feature>
<feature type="binding site" evidence="1">
    <location>
        <position position="106"/>
    </location>
    <ligand>
        <name>NADPH</name>
        <dbReference type="ChEBI" id="CHEBI:57783"/>
    </ligand>
</feature>
<feature type="binding site" evidence="1">
    <location>
        <position position="106"/>
    </location>
    <ligand>
        <name>sn-glycerol 3-phosphate</name>
        <dbReference type="ChEBI" id="CHEBI:57597"/>
    </ligand>
</feature>
<feature type="binding site" evidence="1">
    <location>
        <position position="136"/>
    </location>
    <ligand>
        <name>sn-glycerol 3-phosphate</name>
        <dbReference type="ChEBI" id="CHEBI:57597"/>
    </ligand>
</feature>
<feature type="binding site" evidence="1">
    <location>
        <position position="138"/>
    </location>
    <ligand>
        <name>sn-glycerol 3-phosphate</name>
        <dbReference type="ChEBI" id="CHEBI:57597"/>
    </ligand>
</feature>
<feature type="binding site" evidence="1">
    <location>
        <position position="140"/>
    </location>
    <ligand>
        <name>NADPH</name>
        <dbReference type="ChEBI" id="CHEBI:57783"/>
    </ligand>
</feature>
<feature type="binding site" evidence="1">
    <location>
        <position position="192"/>
    </location>
    <ligand>
        <name>sn-glycerol 3-phosphate</name>
        <dbReference type="ChEBI" id="CHEBI:57597"/>
    </ligand>
</feature>
<feature type="binding site" evidence="1">
    <location>
        <position position="245"/>
    </location>
    <ligand>
        <name>sn-glycerol 3-phosphate</name>
        <dbReference type="ChEBI" id="CHEBI:57597"/>
    </ligand>
</feature>
<feature type="binding site" evidence="1">
    <location>
        <position position="255"/>
    </location>
    <ligand>
        <name>sn-glycerol 3-phosphate</name>
        <dbReference type="ChEBI" id="CHEBI:57597"/>
    </ligand>
</feature>
<feature type="binding site" evidence="1">
    <location>
        <position position="256"/>
    </location>
    <ligand>
        <name>NADPH</name>
        <dbReference type="ChEBI" id="CHEBI:57783"/>
    </ligand>
</feature>
<feature type="binding site" evidence="1">
    <location>
        <position position="256"/>
    </location>
    <ligand>
        <name>sn-glycerol 3-phosphate</name>
        <dbReference type="ChEBI" id="CHEBI:57597"/>
    </ligand>
</feature>
<feature type="binding site" evidence="1">
    <location>
        <position position="257"/>
    </location>
    <ligand>
        <name>sn-glycerol 3-phosphate</name>
        <dbReference type="ChEBI" id="CHEBI:57597"/>
    </ligand>
</feature>
<feature type="binding site" evidence="1">
    <location>
        <position position="280"/>
    </location>
    <ligand>
        <name>NADPH</name>
        <dbReference type="ChEBI" id="CHEBI:57783"/>
    </ligand>
</feature>
<feature type="binding site" evidence="1">
    <location>
        <position position="282"/>
    </location>
    <ligand>
        <name>NADPH</name>
        <dbReference type="ChEBI" id="CHEBI:57783"/>
    </ligand>
</feature>
<gene>
    <name evidence="1" type="primary">gpsA</name>
    <name type="ordered locus">GK2220</name>
</gene>
<evidence type="ECO:0000255" key="1">
    <source>
        <dbReference type="HAMAP-Rule" id="MF_00394"/>
    </source>
</evidence>
<proteinExistence type="inferred from homology"/>
<dbReference type="EC" id="1.1.1.94" evidence="1"/>
<dbReference type="EMBL" id="BA000043">
    <property type="protein sequence ID" value="BAD76505.1"/>
    <property type="molecule type" value="Genomic_DNA"/>
</dbReference>
<dbReference type="RefSeq" id="WP_011231704.1">
    <property type="nucleotide sequence ID" value="NC_006510.1"/>
</dbReference>
<dbReference type="SMR" id="Q5KXT1"/>
<dbReference type="STRING" id="235909.GK2220"/>
<dbReference type="KEGG" id="gka:GK2220"/>
<dbReference type="eggNOG" id="COG0240">
    <property type="taxonomic scope" value="Bacteria"/>
</dbReference>
<dbReference type="HOGENOM" id="CLU_033449_0_2_9"/>
<dbReference type="UniPathway" id="UPA00940"/>
<dbReference type="Proteomes" id="UP000001172">
    <property type="component" value="Chromosome"/>
</dbReference>
<dbReference type="GO" id="GO:0005829">
    <property type="term" value="C:cytosol"/>
    <property type="evidence" value="ECO:0007669"/>
    <property type="project" value="TreeGrafter"/>
</dbReference>
<dbReference type="GO" id="GO:0047952">
    <property type="term" value="F:glycerol-3-phosphate dehydrogenase [NAD(P)+] activity"/>
    <property type="evidence" value="ECO:0007669"/>
    <property type="project" value="UniProtKB-UniRule"/>
</dbReference>
<dbReference type="GO" id="GO:0051287">
    <property type="term" value="F:NAD binding"/>
    <property type="evidence" value="ECO:0007669"/>
    <property type="project" value="InterPro"/>
</dbReference>
<dbReference type="GO" id="GO:0005975">
    <property type="term" value="P:carbohydrate metabolic process"/>
    <property type="evidence" value="ECO:0007669"/>
    <property type="project" value="InterPro"/>
</dbReference>
<dbReference type="GO" id="GO:0046167">
    <property type="term" value="P:glycerol-3-phosphate biosynthetic process"/>
    <property type="evidence" value="ECO:0007669"/>
    <property type="project" value="UniProtKB-UniRule"/>
</dbReference>
<dbReference type="GO" id="GO:0046168">
    <property type="term" value="P:glycerol-3-phosphate catabolic process"/>
    <property type="evidence" value="ECO:0007669"/>
    <property type="project" value="InterPro"/>
</dbReference>
<dbReference type="GO" id="GO:0006650">
    <property type="term" value="P:glycerophospholipid metabolic process"/>
    <property type="evidence" value="ECO:0007669"/>
    <property type="project" value="UniProtKB-UniRule"/>
</dbReference>
<dbReference type="GO" id="GO:0008654">
    <property type="term" value="P:phospholipid biosynthetic process"/>
    <property type="evidence" value="ECO:0007669"/>
    <property type="project" value="UniProtKB-KW"/>
</dbReference>
<dbReference type="FunFam" id="1.10.1040.10:FF:000001">
    <property type="entry name" value="Glycerol-3-phosphate dehydrogenase [NAD(P)+]"/>
    <property type="match status" value="1"/>
</dbReference>
<dbReference type="FunFam" id="3.40.50.720:FF:000019">
    <property type="entry name" value="Glycerol-3-phosphate dehydrogenase [NAD(P)+]"/>
    <property type="match status" value="1"/>
</dbReference>
<dbReference type="Gene3D" id="1.10.1040.10">
    <property type="entry name" value="N-(1-d-carboxylethyl)-l-norvaline Dehydrogenase, domain 2"/>
    <property type="match status" value="1"/>
</dbReference>
<dbReference type="Gene3D" id="3.40.50.720">
    <property type="entry name" value="NAD(P)-binding Rossmann-like Domain"/>
    <property type="match status" value="1"/>
</dbReference>
<dbReference type="HAMAP" id="MF_00394">
    <property type="entry name" value="NAD_Glyc3P_dehydrog"/>
    <property type="match status" value="1"/>
</dbReference>
<dbReference type="InterPro" id="IPR008927">
    <property type="entry name" value="6-PGluconate_DH-like_C_sf"/>
</dbReference>
<dbReference type="InterPro" id="IPR013328">
    <property type="entry name" value="6PGD_dom2"/>
</dbReference>
<dbReference type="InterPro" id="IPR006168">
    <property type="entry name" value="G3P_DH_NAD-dep"/>
</dbReference>
<dbReference type="InterPro" id="IPR006109">
    <property type="entry name" value="G3P_DH_NAD-dep_C"/>
</dbReference>
<dbReference type="InterPro" id="IPR011128">
    <property type="entry name" value="G3P_DH_NAD-dep_N"/>
</dbReference>
<dbReference type="InterPro" id="IPR036291">
    <property type="entry name" value="NAD(P)-bd_dom_sf"/>
</dbReference>
<dbReference type="NCBIfam" id="NF000940">
    <property type="entry name" value="PRK00094.1-2"/>
    <property type="match status" value="1"/>
</dbReference>
<dbReference type="NCBIfam" id="NF000941">
    <property type="entry name" value="PRK00094.1-3"/>
    <property type="match status" value="1"/>
</dbReference>
<dbReference type="NCBIfam" id="NF000942">
    <property type="entry name" value="PRK00094.1-4"/>
    <property type="match status" value="1"/>
</dbReference>
<dbReference type="PANTHER" id="PTHR11728">
    <property type="entry name" value="GLYCEROL-3-PHOSPHATE DEHYDROGENASE"/>
    <property type="match status" value="1"/>
</dbReference>
<dbReference type="PANTHER" id="PTHR11728:SF1">
    <property type="entry name" value="GLYCEROL-3-PHOSPHATE DEHYDROGENASE [NAD(+)] 2, CHLOROPLASTIC"/>
    <property type="match status" value="1"/>
</dbReference>
<dbReference type="Pfam" id="PF07479">
    <property type="entry name" value="NAD_Gly3P_dh_C"/>
    <property type="match status" value="1"/>
</dbReference>
<dbReference type="Pfam" id="PF01210">
    <property type="entry name" value="NAD_Gly3P_dh_N"/>
    <property type="match status" value="1"/>
</dbReference>
<dbReference type="PIRSF" id="PIRSF000114">
    <property type="entry name" value="Glycerol-3-P_dh"/>
    <property type="match status" value="1"/>
</dbReference>
<dbReference type="PRINTS" id="PR00077">
    <property type="entry name" value="GPDHDRGNASE"/>
</dbReference>
<dbReference type="SUPFAM" id="SSF48179">
    <property type="entry name" value="6-phosphogluconate dehydrogenase C-terminal domain-like"/>
    <property type="match status" value="1"/>
</dbReference>
<dbReference type="SUPFAM" id="SSF51735">
    <property type="entry name" value="NAD(P)-binding Rossmann-fold domains"/>
    <property type="match status" value="1"/>
</dbReference>
<dbReference type="PROSITE" id="PS00957">
    <property type="entry name" value="NAD_G3PDH"/>
    <property type="match status" value="1"/>
</dbReference>
<sequence length="344" mass="36831">MENIAVLGAGSWGTALALVLADNGHHVRLWGHRTEQISEINEKRTNEKYLPGVRLPDAIIGYDDLCAALDGVAIVVLAVPTKAIRSVLADVRACLAKPITIVAVSKGIEPGTHKRVSEMVAEEMGEWLADVVVLSGPSHAEEVVLRHPTTVAVSSPNMEAARRIQDIFMNHHYFRVYTNPDLIGVEVGGALKNIIALAAGISDGLGYGDNAKAALITRGLAEIARLGCALGANPLTFAGLTGVGDLIVTCTSVHSRNWRAGYMLGQGKKLDEVLESMGMVVEGVRTTKAAYELAKELGVKMPITEALYDVLFAGKDPKEAVDSLMARGKKEEMDDLNNIFAEQE</sequence>
<organism>
    <name type="scientific">Geobacillus kaustophilus (strain HTA426)</name>
    <dbReference type="NCBI Taxonomy" id="235909"/>
    <lineage>
        <taxon>Bacteria</taxon>
        <taxon>Bacillati</taxon>
        <taxon>Bacillota</taxon>
        <taxon>Bacilli</taxon>
        <taxon>Bacillales</taxon>
        <taxon>Anoxybacillaceae</taxon>
        <taxon>Geobacillus</taxon>
        <taxon>Geobacillus thermoleovorans group</taxon>
    </lineage>
</organism>
<keyword id="KW-0963">Cytoplasm</keyword>
<keyword id="KW-0444">Lipid biosynthesis</keyword>
<keyword id="KW-0443">Lipid metabolism</keyword>
<keyword id="KW-0520">NAD</keyword>
<keyword id="KW-0521">NADP</keyword>
<keyword id="KW-0547">Nucleotide-binding</keyword>
<keyword id="KW-0560">Oxidoreductase</keyword>
<keyword id="KW-0594">Phospholipid biosynthesis</keyword>
<keyword id="KW-1208">Phospholipid metabolism</keyword>
<keyword id="KW-1185">Reference proteome</keyword>
<protein>
    <recommendedName>
        <fullName evidence="1">Glycerol-3-phosphate dehydrogenase [NAD(P)+]</fullName>
        <ecNumber evidence="1">1.1.1.94</ecNumber>
    </recommendedName>
    <alternativeName>
        <fullName evidence="1">NAD(P)(+)-dependent glycerol-3-phosphate dehydrogenase</fullName>
    </alternativeName>
    <alternativeName>
        <fullName evidence="1">NAD(P)H-dependent dihydroxyacetone-phosphate reductase</fullName>
    </alternativeName>
</protein>
<name>GPDA_GEOKA</name>
<accession>Q5KXT1</accession>
<reference key="1">
    <citation type="journal article" date="2004" name="Nucleic Acids Res.">
        <title>Thermoadaptation trait revealed by the genome sequence of thermophilic Geobacillus kaustophilus.</title>
        <authorList>
            <person name="Takami H."/>
            <person name="Takaki Y."/>
            <person name="Chee G.-J."/>
            <person name="Nishi S."/>
            <person name="Shimamura S."/>
            <person name="Suzuki H."/>
            <person name="Matsui S."/>
            <person name="Uchiyama I."/>
        </authorList>
    </citation>
    <scope>NUCLEOTIDE SEQUENCE [LARGE SCALE GENOMIC DNA]</scope>
    <source>
        <strain>HTA426</strain>
    </source>
</reference>
<comment type="function">
    <text evidence="1">Catalyzes the reduction of the glycolytic intermediate dihydroxyacetone phosphate (DHAP) to sn-glycerol 3-phosphate (G3P), the key precursor for phospholipid synthesis.</text>
</comment>
<comment type="catalytic activity">
    <reaction evidence="1">
        <text>sn-glycerol 3-phosphate + NAD(+) = dihydroxyacetone phosphate + NADH + H(+)</text>
        <dbReference type="Rhea" id="RHEA:11092"/>
        <dbReference type="ChEBI" id="CHEBI:15378"/>
        <dbReference type="ChEBI" id="CHEBI:57540"/>
        <dbReference type="ChEBI" id="CHEBI:57597"/>
        <dbReference type="ChEBI" id="CHEBI:57642"/>
        <dbReference type="ChEBI" id="CHEBI:57945"/>
        <dbReference type="EC" id="1.1.1.94"/>
    </reaction>
    <physiologicalReaction direction="right-to-left" evidence="1">
        <dbReference type="Rhea" id="RHEA:11094"/>
    </physiologicalReaction>
</comment>
<comment type="catalytic activity">
    <reaction evidence="1">
        <text>sn-glycerol 3-phosphate + NADP(+) = dihydroxyacetone phosphate + NADPH + H(+)</text>
        <dbReference type="Rhea" id="RHEA:11096"/>
        <dbReference type="ChEBI" id="CHEBI:15378"/>
        <dbReference type="ChEBI" id="CHEBI:57597"/>
        <dbReference type="ChEBI" id="CHEBI:57642"/>
        <dbReference type="ChEBI" id="CHEBI:57783"/>
        <dbReference type="ChEBI" id="CHEBI:58349"/>
        <dbReference type="EC" id="1.1.1.94"/>
    </reaction>
    <physiologicalReaction direction="right-to-left" evidence="1">
        <dbReference type="Rhea" id="RHEA:11098"/>
    </physiologicalReaction>
</comment>
<comment type="pathway">
    <text evidence="1">Membrane lipid metabolism; glycerophospholipid metabolism.</text>
</comment>
<comment type="subcellular location">
    <subcellularLocation>
        <location evidence="1">Cytoplasm</location>
    </subcellularLocation>
</comment>
<comment type="similarity">
    <text evidence="1">Belongs to the NAD-dependent glycerol-3-phosphate dehydrogenase family.</text>
</comment>